<keyword id="KW-1003">Cell membrane</keyword>
<keyword id="KW-0390">IgG-binding protein</keyword>
<keyword id="KW-0472">Membrane</keyword>
<keyword id="KW-0677">Repeat</keyword>
<keyword id="KW-0964">Secreted</keyword>
<keyword id="KW-0732">Signal</keyword>
<keyword id="KW-0843">Virulence</keyword>
<name>SBI_STAA3</name>
<feature type="signal peptide" evidence="3">
    <location>
        <begin position="1"/>
        <end position="29"/>
    </location>
</feature>
<feature type="chain" id="PRO_0000361897" description="Immunoglobulin-binding protein Sbi">
    <location>
        <begin position="30"/>
        <end position="436"/>
    </location>
</feature>
<feature type="repeat" description="B 1">
    <location>
        <begin position="43"/>
        <end position="94"/>
    </location>
</feature>
<feature type="repeat" description="B 2">
    <location>
        <begin position="95"/>
        <end position="148"/>
    </location>
</feature>
<feature type="repeat" description="2-1">
    <location>
        <begin position="267"/>
        <end position="271"/>
    </location>
</feature>
<feature type="repeat" description="2-2">
    <location>
        <begin position="272"/>
        <end position="276"/>
    </location>
</feature>
<feature type="repeat" description="2-3">
    <location>
        <begin position="277"/>
        <end position="281"/>
    </location>
</feature>
<feature type="repeat" description="2-4">
    <location>
        <begin position="282"/>
        <end position="286"/>
    </location>
</feature>
<feature type="repeat" description="2-5">
    <location>
        <begin position="287"/>
        <end position="291"/>
    </location>
</feature>
<feature type="repeat" description="2-6">
    <location>
        <begin position="292"/>
        <end position="296"/>
    </location>
</feature>
<feature type="repeat" description="2-7">
    <location>
        <begin position="297"/>
        <end position="301"/>
    </location>
</feature>
<feature type="repeat" description="2-8">
    <location>
        <begin position="302"/>
        <end position="306"/>
    </location>
</feature>
<feature type="region of interest" description="Sbi-I">
    <location>
        <begin position="42"/>
        <end position="94"/>
    </location>
</feature>
<feature type="region of interest" description="Sbi-II">
    <location>
        <begin position="103"/>
        <end position="153"/>
    </location>
</feature>
<feature type="region of interest" description="Sbi-III">
    <location>
        <begin position="154"/>
        <end position="195"/>
    </location>
</feature>
<feature type="region of interest" description="Sbi-IV">
    <location>
        <begin position="196"/>
        <end position="253"/>
    </location>
</feature>
<feature type="region of interest" description="8 X 5 AA tandem repeat of P-[KQ]-[AISV]-[EKQ]-[AKLSV]">
    <location>
        <begin position="267"/>
        <end position="306"/>
    </location>
</feature>
<comment type="function">
    <text evidence="1">Plays a role in the inhibition of both the innate and adaptive immune responses. Possesses two N-terminal domains that bind the Fc region of IgG and two domains that form a tripartite complex with complement factors C3b and CFH. By recruiting CFH and C3b, the secreted form acts as a potent complement inhibitor of the alternative pathway-mediated lysis.</text>
</comment>
<comment type="subunit">
    <text evidence="1 2">Interacts (via sbi-I and sbi-II domains) with the Fc region of mammalian immunoglobulin G (IgG) proteins. Interacts (via sbi-III and sbi-IV domains) with host complement C3. Interacts (via sbi-III and sbi-IV domains) with host CFH (By similarity). Interacts (via sbi-IV domain) with beta-2-glycoprotein 1/APOH (By similarity).</text>
</comment>
<comment type="subcellular location">
    <subcellularLocation>
        <location evidence="1">Secreted</location>
    </subcellularLocation>
    <subcellularLocation>
        <location evidence="1">Cell membrane</location>
    </subcellularLocation>
    <text evidence="1">Occurs both extracellularly and associated with the cytoplasmic membrane where only the domains I and II are exposed to the extracellular media. Membrane association occurs via binding to lipoteichoic acid.</text>
</comment>
<comment type="domain">
    <text evidence="1">Sbi-I and sbi-II domains provide protection only when anchored to the cell surface, whereas only the secreted sbi-III and sbi-IV domains are biologically active.</text>
</comment>
<comment type="similarity">
    <text evidence="4">Belongs to the immunoglobulin-binding protein Sbi family.</text>
</comment>
<dbReference type="EMBL" id="CP000255">
    <property type="protein sequence ID" value="ABD22385.1"/>
    <property type="molecule type" value="Genomic_DNA"/>
</dbReference>
<dbReference type="RefSeq" id="WP_000792564.1">
    <property type="nucleotide sequence ID" value="NZ_CP027476.1"/>
</dbReference>
<dbReference type="SMR" id="Q2FE79"/>
<dbReference type="KEGG" id="saa:SAUSA300_2364"/>
<dbReference type="HOGENOM" id="CLU_051343_0_0_9"/>
<dbReference type="OMA" id="NAHASEQ"/>
<dbReference type="PRO" id="PR:Q2FE79"/>
<dbReference type="Proteomes" id="UP000001939">
    <property type="component" value="Chromosome"/>
</dbReference>
<dbReference type="GO" id="GO:0005576">
    <property type="term" value="C:extracellular region"/>
    <property type="evidence" value="ECO:0007669"/>
    <property type="project" value="UniProtKB-SubCell"/>
</dbReference>
<dbReference type="GO" id="GO:0005886">
    <property type="term" value="C:plasma membrane"/>
    <property type="evidence" value="ECO:0007669"/>
    <property type="project" value="UniProtKB-SubCell"/>
</dbReference>
<dbReference type="GO" id="GO:0019864">
    <property type="term" value="F:IgG binding"/>
    <property type="evidence" value="ECO:0007669"/>
    <property type="project" value="UniProtKB-KW"/>
</dbReference>
<dbReference type="Gene3D" id="1.20.5.420">
    <property type="entry name" value="Immunoglobulin FC, subunit C"/>
    <property type="match status" value="2"/>
</dbReference>
<dbReference type="Gene3D" id="1.10.10.1270">
    <property type="entry name" value="Sbi, C3 binding domain IV"/>
    <property type="match status" value="1"/>
</dbReference>
<dbReference type="InterPro" id="IPR009063">
    <property type="entry name" value="Ig/albumin-bd_sf"/>
</dbReference>
<dbReference type="InterPro" id="IPR021657">
    <property type="entry name" value="IgG-binding_Sbi_dom_IV"/>
</dbReference>
<dbReference type="InterPro" id="IPR003132">
    <property type="entry name" value="Protein_A_Ig-bd"/>
</dbReference>
<dbReference type="InterPro" id="IPR041909">
    <property type="entry name" value="Sbi_C3_db_domIV"/>
</dbReference>
<dbReference type="Pfam" id="PF02216">
    <property type="entry name" value="B"/>
    <property type="match status" value="2"/>
</dbReference>
<dbReference type="Pfam" id="PF11621">
    <property type="entry name" value="Sbi-IV"/>
    <property type="match status" value="1"/>
</dbReference>
<dbReference type="SUPFAM" id="SSF46997">
    <property type="entry name" value="Bacterial immunoglobulin/albumin-binding domains"/>
    <property type="match status" value="2"/>
</dbReference>
<sequence length="436" mass="50070">MKNKYISKLLVGAATITLATMISNGEAKASENTQQTSTKHQTTQNNYVTDQQKAFYQVLHLKGITEEQRNQYIKTLREHPERAQEVFSESLKDSKNPDRRVAQQNAFYNVLKNDNLTEQEKNNYIAQIKENPDRSQQVWVESVQSSKAKERQNIENADKAIKDFQDNKAPHDKSAAYEANSKLPKDLRDKNNRFVEKVSIEKAIVRHDERVKSANDAISKLNEKDSIENRRLAQREVNKAPMDVKEHLQKQLDALVAQKDAEKKVAPKVEAPQIQSPQIEKPKVESPKVEVPQIQSPKVEVPQSKLLGYYQSLKDSFNYGYKYLTDTYKSYKEKYDTAKYYYNTYYKYKGAIDQTVLTVLGSGSKSYIQPLKVDDKNGYLAKSYAQVRNYVTESINTGKVLYTFYQNPTLVKTAIKAQETASSIKNTLSNLLSFWK</sequence>
<protein>
    <recommendedName>
        <fullName>Immunoglobulin-binding protein Sbi</fullName>
    </recommendedName>
</protein>
<gene>
    <name type="primary">sbi</name>
    <name type="ordered locus">SAUSA300_2364</name>
</gene>
<proteinExistence type="inferred from homology"/>
<evidence type="ECO:0000250" key="1">
    <source>
        <dbReference type="UniProtKB" id="A6QJQ7"/>
    </source>
</evidence>
<evidence type="ECO:0000250" key="2">
    <source>
        <dbReference type="UniProtKB" id="Q931F4"/>
    </source>
</evidence>
<evidence type="ECO:0000255" key="3"/>
<evidence type="ECO:0000305" key="4"/>
<accession>Q2FE79</accession>
<organism>
    <name type="scientific">Staphylococcus aureus (strain USA300)</name>
    <dbReference type="NCBI Taxonomy" id="367830"/>
    <lineage>
        <taxon>Bacteria</taxon>
        <taxon>Bacillati</taxon>
        <taxon>Bacillota</taxon>
        <taxon>Bacilli</taxon>
        <taxon>Bacillales</taxon>
        <taxon>Staphylococcaceae</taxon>
        <taxon>Staphylococcus</taxon>
    </lineage>
</organism>
<reference key="1">
    <citation type="journal article" date="2006" name="Lancet">
        <title>Complete genome sequence of USA300, an epidemic clone of community-acquired meticillin-resistant Staphylococcus aureus.</title>
        <authorList>
            <person name="Diep B.A."/>
            <person name="Gill S.R."/>
            <person name="Chang R.F."/>
            <person name="Phan T.H."/>
            <person name="Chen J.H."/>
            <person name="Davidson M.G."/>
            <person name="Lin F."/>
            <person name="Lin J."/>
            <person name="Carleton H.A."/>
            <person name="Mongodin E.F."/>
            <person name="Sensabaugh G.F."/>
            <person name="Perdreau-Remington F."/>
        </authorList>
    </citation>
    <scope>NUCLEOTIDE SEQUENCE [LARGE SCALE GENOMIC DNA]</scope>
    <source>
        <strain>USA300</strain>
    </source>
</reference>